<keyword id="KW-0066">ATP synthesis</keyword>
<keyword id="KW-1003">Cell membrane</keyword>
<keyword id="KW-0138">CF(0)</keyword>
<keyword id="KW-0375">Hydrogen ion transport</keyword>
<keyword id="KW-0406">Ion transport</keyword>
<keyword id="KW-0472">Membrane</keyword>
<keyword id="KW-1185">Reference proteome</keyword>
<keyword id="KW-0812">Transmembrane</keyword>
<keyword id="KW-1133">Transmembrane helix</keyword>
<keyword id="KW-0813">Transport</keyword>
<dbReference type="EMBL" id="CP000386">
    <property type="protein sequence ID" value="ABG04603.1"/>
    <property type="molecule type" value="Genomic_DNA"/>
</dbReference>
<dbReference type="RefSeq" id="WP_011564620.1">
    <property type="nucleotide sequence ID" value="NC_008148.1"/>
</dbReference>
<dbReference type="SMR" id="Q1AVH5"/>
<dbReference type="STRING" id="266117.Rxyl_1642"/>
<dbReference type="KEGG" id="rxy:Rxyl_1642"/>
<dbReference type="eggNOG" id="COG0711">
    <property type="taxonomic scope" value="Bacteria"/>
</dbReference>
<dbReference type="HOGENOM" id="CLU_079215_4_1_11"/>
<dbReference type="OrthoDB" id="5243669at2"/>
<dbReference type="PhylomeDB" id="Q1AVH5"/>
<dbReference type="Proteomes" id="UP000006637">
    <property type="component" value="Chromosome"/>
</dbReference>
<dbReference type="GO" id="GO:0005886">
    <property type="term" value="C:plasma membrane"/>
    <property type="evidence" value="ECO:0007669"/>
    <property type="project" value="UniProtKB-SubCell"/>
</dbReference>
<dbReference type="GO" id="GO:0045259">
    <property type="term" value="C:proton-transporting ATP synthase complex"/>
    <property type="evidence" value="ECO:0007669"/>
    <property type="project" value="UniProtKB-KW"/>
</dbReference>
<dbReference type="GO" id="GO:0046933">
    <property type="term" value="F:proton-transporting ATP synthase activity, rotational mechanism"/>
    <property type="evidence" value="ECO:0007669"/>
    <property type="project" value="UniProtKB-UniRule"/>
</dbReference>
<dbReference type="GO" id="GO:0046961">
    <property type="term" value="F:proton-transporting ATPase activity, rotational mechanism"/>
    <property type="evidence" value="ECO:0007669"/>
    <property type="project" value="TreeGrafter"/>
</dbReference>
<dbReference type="CDD" id="cd06503">
    <property type="entry name" value="ATP-synt_Fo_b"/>
    <property type="match status" value="1"/>
</dbReference>
<dbReference type="Gene3D" id="1.20.5.620">
    <property type="entry name" value="F1F0 ATP synthase subunit B, membrane domain"/>
    <property type="match status" value="1"/>
</dbReference>
<dbReference type="HAMAP" id="MF_01398">
    <property type="entry name" value="ATP_synth_b_bprime"/>
    <property type="match status" value="1"/>
</dbReference>
<dbReference type="InterPro" id="IPR028987">
    <property type="entry name" value="ATP_synth_B-like_membr_sf"/>
</dbReference>
<dbReference type="InterPro" id="IPR002146">
    <property type="entry name" value="ATP_synth_b/b'su_bac/chlpt"/>
</dbReference>
<dbReference type="InterPro" id="IPR005864">
    <property type="entry name" value="ATP_synth_F0_bsu_bac"/>
</dbReference>
<dbReference type="InterPro" id="IPR050059">
    <property type="entry name" value="ATP_synthase_B_chain"/>
</dbReference>
<dbReference type="NCBIfam" id="TIGR01144">
    <property type="entry name" value="ATP_synt_b"/>
    <property type="match status" value="1"/>
</dbReference>
<dbReference type="PANTHER" id="PTHR33445:SF1">
    <property type="entry name" value="ATP SYNTHASE SUBUNIT B"/>
    <property type="match status" value="1"/>
</dbReference>
<dbReference type="PANTHER" id="PTHR33445">
    <property type="entry name" value="ATP SYNTHASE SUBUNIT B', CHLOROPLASTIC"/>
    <property type="match status" value="1"/>
</dbReference>
<dbReference type="Pfam" id="PF00430">
    <property type="entry name" value="ATP-synt_B"/>
    <property type="match status" value="1"/>
</dbReference>
<dbReference type="SUPFAM" id="SSF81573">
    <property type="entry name" value="F1F0 ATP synthase subunit B, membrane domain"/>
    <property type="match status" value="1"/>
</dbReference>
<protein>
    <recommendedName>
        <fullName evidence="1">ATP synthase subunit b</fullName>
    </recommendedName>
    <alternativeName>
        <fullName evidence="1">ATP synthase F(0) sector subunit b</fullName>
    </alternativeName>
    <alternativeName>
        <fullName evidence="1">ATPase subunit I</fullName>
    </alternativeName>
    <alternativeName>
        <fullName evidence="1">F-type ATPase subunit b</fullName>
        <shortName evidence="1">F-ATPase subunit b</shortName>
    </alternativeName>
</protein>
<reference key="1">
    <citation type="submission" date="2006-06" db="EMBL/GenBank/DDBJ databases">
        <title>Complete sequence of Rubrobacter xylanophilus DSM 9941.</title>
        <authorList>
            <consortium name="US DOE Joint Genome Institute"/>
            <person name="Copeland A."/>
            <person name="Lucas S."/>
            <person name="Lapidus A."/>
            <person name="Barry K."/>
            <person name="Detter J.C."/>
            <person name="Glavina del Rio T."/>
            <person name="Hammon N."/>
            <person name="Israni S."/>
            <person name="Dalin E."/>
            <person name="Tice H."/>
            <person name="Pitluck S."/>
            <person name="Munk A.C."/>
            <person name="Brettin T."/>
            <person name="Bruce D."/>
            <person name="Han C."/>
            <person name="Tapia R."/>
            <person name="Gilna P."/>
            <person name="Schmutz J."/>
            <person name="Larimer F."/>
            <person name="Land M."/>
            <person name="Hauser L."/>
            <person name="Kyrpides N."/>
            <person name="Lykidis A."/>
            <person name="da Costa M.S."/>
            <person name="Rainey F.A."/>
            <person name="Empadinhas N."/>
            <person name="Jolivet E."/>
            <person name="Battista J.R."/>
            <person name="Richardson P."/>
        </authorList>
    </citation>
    <scope>NUCLEOTIDE SEQUENCE [LARGE SCALE GENOMIC DNA]</scope>
    <source>
        <strain>DSM 9941 / JCM 11954 / NBRC 16129 / PRD-1</strain>
    </source>
</reference>
<gene>
    <name evidence="1" type="primary">atpF</name>
    <name type="ordered locus">Rxyl_1642</name>
</gene>
<proteinExistence type="inferred from homology"/>
<feature type="chain" id="PRO_0000368732" description="ATP synthase subunit b">
    <location>
        <begin position="1"/>
        <end position="174"/>
    </location>
</feature>
<feature type="transmembrane region" description="Helical" evidence="1">
    <location>
        <begin position="9"/>
        <end position="29"/>
    </location>
</feature>
<organism>
    <name type="scientific">Rubrobacter xylanophilus (strain DSM 9941 / JCM 11954 / NBRC 16129 / PRD-1)</name>
    <dbReference type="NCBI Taxonomy" id="266117"/>
    <lineage>
        <taxon>Bacteria</taxon>
        <taxon>Bacillati</taxon>
        <taxon>Actinomycetota</taxon>
        <taxon>Rubrobacteria</taxon>
        <taxon>Rubrobacterales</taxon>
        <taxon>Rubrobacteraceae</taxon>
        <taxon>Rubrobacter</taxon>
    </lineage>
</organism>
<sequence length="174" mass="20258">MDPTGIFDLPNTSLIFWEVVTFLILLALLYRYVYPIIRDQIQKRQAQIEQAIEEAEKTRAEARELLEEYRRQIEAARGEARQILDEARRQAKAQRERAREEAREEGDRIIQRAREEISRERDAALREVRREVADMVIMASSRVIGRELDAAEHERLINEALESLEAEVAGGRTA</sequence>
<comment type="function">
    <text evidence="1">F(1)F(0) ATP synthase produces ATP from ADP in the presence of a proton or sodium gradient. F-type ATPases consist of two structural domains, F(1) containing the extramembraneous catalytic core and F(0) containing the membrane proton channel, linked together by a central stalk and a peripheral stalk. During catalysis, ATP synthesis in the catalytic domain of F(1) is coupled via a rotary mechanism of the central stalk subunits to proton translocation.</text>
</comment>
<comment type="function">
    <text evidence="1">Component of the F(0) channel, it forms part of the peripheral stalk, linking F(1) to F(0).</text>
</comment>
<comment type="subunit">
    <text evidence="1">F-type ATPases have 2 components, F(1) - the catalytic core - and F(0) - the membrane proton channel. F(1) has five subunits: alpha(3), beta(3), gamma(1), delta(1), epsilon(1). F(0) has three main subunits: a(1), b(2) and c(10-14). The alpha and beta chains form an alternating ring which encloses part of the gamma chain. F(1) is attached to F(0) by a central stalk formed by the gamma and epsilon chains, while a peripheral stalk is formed by the delta and b chains.</text>
</comment>
<comment type="subcellular location">
    <subcellularLocation>
        <location evidence="1">Cell membrane</location>
        <topology evidence="1">Single-pass membrane protein</topology>
    </subcellularLocation>
</comment>
<comment type="similarity">
    <text evidence="1">Belongs to the ATPase B chain family.</text>
</comment>
<name>ATPF_RUBXD</name>
<accession>Q1AVH5</accession>
<evidence type="ECO:0000255" key="1">
    <source>
        <dbReference type="HAMAP-Rule" id="MF_01398"/>
    </source>
</evidence>